<gene>
    <name evidence="1" type="primary">psbI</name>
</gene>
<feature type="chain" id="PRO_0000298321" description="Photosystem II reaction center protein I">
    <location>
        <begin position="1"/>
        <end position="36"/>
    </location>
</feature>
<feature type="transmembrane region" description="Helical" evidence="1">
    <location>
        <begin position="4"/>
        <end position="24"/>
    </location>
</feature>
<name>PSBI_LOBMA</name>
<evidence type="ECO:0000255" key="1">
    <source>
        <dbReference type="HAMAP-Rule" id="MF_01316"/>
    </source>
</evidence>
<sequence length="36" mass="4168">MLTLKLFVYTVVIFFVSLFIFGFLSNDPGRNPGREE</sequence>
<protein>
    <recommendedName>
        <fullName evidence="1">Photosystem II reaction center protein I</fullName>
        <shortName evidence="1">PSII-I</shortName>
    </recommendedName>
    <alternativeName>
        <fullName evidence="1">PSII 4.8 kDa protein</fullName>
    </alternativeName>
</protein>
<dbReference type="EMBL" id="AP009375">
    <property type="protein sequence ID" value="BAF50533.1"/>
    <property type="molecule type" value="Genomic_DNA"/>
</dbReference>
<dbReference type="RefSeq" id="YP_001123709.1">
    <property type="nucleotide sequence ID" value="NC_009274.1"/>
</dbReference>
<dbReference type="SMR" id="A4QLH8"/>
<dbReference type="GeneID" id="4964820"/>
<dbReference type="GO" id="GO:0009535">
    <property type="term" value="C:chloroplast thylakoid membrane"/>
    <property type="evidence" value="ECO:0007669"/>
    <property type="project" value="UniProtKB-SubCell"/>
</dbReference>
<dbReference type="GO" id="GO:0009539">
    <property type="term" value="C:photosystem II reaction center"/>
    <property type="evidence" value="ECO:0007669"/>
    <property type="project" value="InterPro"/>
</dbReference>
<dbReference type="GO" id="GO:0015979">
    <property type="term" value="P:photosynthesis"/>
    <property type="evidence" value="ECO:0007669"/>
    <property type="project" value="UniProtKB-UniRule"/>
</dbReference>
<dbReference type="HAMAP" id="MF_01316">
    <property type="entry name" value="PSII_PsbI"/>
    <property type="match status" value="1"/>
</dbReference>
<dbReference type="InterPro" id="IPR003686">
    <property type="entry name" value="PSII_PsbI"/>
</dbReference>
<dbReference type="InterPro" id="IPR037271">
    <property type="entry name" value="PSII_PsbI_sf"/>
</dbReference>
<dbReference type="NCBIfam" id="NF002735">
    <property type="entry name" value="PRK02655.1"/>
    <property type="match status" value="1"/>
</dbReference>
<dbReference type="PANTHER" id="PTHR35772">
    <property type="entry name" value="PHOTOSYSTEM II REACTION CENTER PROTEIN I"/>
    <property type="match status" value="1"/>
</dbReference>
<dbReference type="PANTHER" id="PTHR35772:SF1">
    <property type="entry name" value="PHOTOSYSTEM II REACTION CENTER PROTEIN I"/>
    <property type="match status" value="1"/>
</dbReference>
<dbReference type="Pfam" id="PF02532">
    <property type="entry name" value="PsbI"/>
    <property type="match status" value="1"/>
</dbReference>
<dbReference type="SUPFAM" id="SSF161041">
    <property type="entry name" value="Photosystem II reaction center protein I, PsbI"/>
    <property type="match status" value="1"/>
</dbReference>
<comment type="function">
    <text evidence="1">One of the components of the core complex of photosystem II (PSII), required for its stability and/or assembly. PSII is a light-driven water:plastoquinone oxidoreductase that uses light energy to abstract electrons from H(2)O, generating O(2) and a proton gradient subsequently used for ATP formation. It consists of a core antenna complex that captures photons, and an electron transfer chain that converts photonic excitation into a charge separation.</text>
</comment>
<comment type="subunit">
    <text evidence="1">PSII is composed of 1 copy each of membrane proteins PsbA, PsbB, PsbC, PsbD, PsbE, PsbF, PsbH, PsbI, PsbJ, PsbK, PsbL, PsbM, PsbT, PsbX, PsbY, PsbZ, Psb30/Ycf12, at least 3 peripheral proteins of the oxygen-evolving complex and a large number of cofactors. It forms dimeric complexes.</text>
</comment>
<comment type="subcellular location">
    <subcellularLocation>
        <location evidence="1">Plastid</location>
        <location evidence="1">Chloroplast thylakoid membrane</location>
        <topology evidence="1">Single-pass membrane protein</topology>
    </subcellularLocation>
</comment>
<comment type="similarity">
    <text evidence="1">Belongs to the PsbI family.</text>
</comment>
<reference key="1">
    <citation type="submission" date="2007-03" db="EMBL/GenBank/DDBJ databases">
        <title>Sequencing analysis of Lobularia maritima chloroplast DNA.</title>
        <authorList>
            <person name="Hosouchi T."/>
            <person name="Tsuruoka H."/>
            <person name="Kotani H."/>
        </authorList>
    </citation>
    <scope>NUCLEOTIDE SEQUENCE [LARGE SCALE GENOMIC DNA]</scope>
</reference>
<organism>
    <name type="scientific">Lobularia maritima</name>
    <name type="common">Sweet alyssum</name>
    <name type="synonym">Alyssum maritimum</name>
    <dbReference type="NCBI Taxonomy" id="226051"/>
    <lineage>
        <taxon>Eukaryota</taxon>
        <taxon>Viridiplantae</taxon>
        <taxon>Streptophyta</taxon>
        <taxon>Embryophyta</taxon>
        <taxon>Tracheophyta</taxon>
        <taxon>Spermatophyta</taxon>
        <taxon>Magnoliopsida</taxon>
        <taxon>eudicotyledons</taxon>
        <taxon>Gunneridae</taxon>
        <taxon>Pentapetalae</taxon>
        <taxon>rosids</taxon>
        <taxon>malvids</taxon>
        <taxon>Brassicales</taxon>
        <taxon>Brassicaceae</taxon>
        <taxon>Anastaticeae</taxon>
        <taxon>Lobularia</taxon>
    </lineage>
</organism>
<proteinExistence type="inferred from homology"/>
<geneLocation type="chloroplast"/>
<keyword id="KW-0150">Chloroplast</keyword>
<keyword id="KW-0472">Membrane</keyword>
<keyword id="KW-0602">Photosynthesis</keyword>
<keyword id="KW-0604">Photosystem II</keyword>
<keyword id="KW-0934">Plastid</keyword>
<keyword id="KW-0674">Reaction center</keyword>
<keyword id="KW-0793">Thylakoid</keyword>
<keyword id="KW-0812">Transmembrane</keyword>
<keyword id="KW-1133">Transmembrane helix</keyword>
<accession>A4QLH8</accession>